<gene>
    <name type="primary">P39</name>
</gene>
<organismHost>
    <name type="scientific">Lepidoptera</name>
    <name type="common">butterflies and moths</name>
    <dbReference type="NCBI Taxonomy" id="7088"/>
</organismHost>
<name>VP39_NPVLD</name>
<keyword id="KW-0167">Capsid protein</keyword>
<keyword id="KW-0426">Late protein</keyword>
<keyword id="KW-0946">Virion</keyword>
<sequence>MALVSGALSTNRLRNYCVFGAVQPFDNCRAYGSPCSPDSTNNDGWFICDYHSSIRFKIEKMVLPIPDAEGNIYNRTVGKSLVNHKTLGAARVLIPTRDNYKTVLNLNSMSLAEQLVTHMIYDNVEAQGAVCKALQHNENFQTETYRLAEDMFNRTSAILAMTNPRRYCSQVNSNYARIWTTDDVNVAGNVFESMPPFLKNLINVAVAPEQIMIDEKTLVIRNCPTCNIDDSGLVANVQLYNPVVPRYRSTFNENVLHVENVLKFKGNANALQKSLSRYEPYPIVVPLMLGTQTLNTSSAYKQFTVPTRDDFAALNQRTGAAAAAPPAPAAAPAGPRPAAELEYDETLDRFARWRAR</sequence>
<accession>P35840</accession>
<protein>
    <recommendedName>
        <fullName>Major capsid protein</fullName>
    </recommendedName>
</protein>
<comment type="subcellular location">
    <subcellularLocation>
        <location evidence="2">Virion</location>
    </subcellularLocation>
</comment>
<comment type="miscellaneous">
    <text evidence="1">Expressed late in infection.</text>
</comment>
<comment type="similarity">
    <text evidence="2">Belongs to the baculoviridae p39 family.</text>
</comment>
<evidence type="ECO:0000250" key="1"/>
<evidence type="ECO:0000305" key="2"/>
<organism>
    <name type="scientific">Lymantria dispar multicapsid nuclear polyhedrosis virus</name>
    <name type="common">LdMNPV</name>
    <dbReference type="NCBI Taxonomy" id="10449"/>
    <lineage>
        <taxon>Viruses</taxon>
        <taxon>Viruses incertae sedis</taxon>
        <taxon>Naldaviricetes</taxon>
        <taxon>Lefavirales</taxon>
        <taxon>Baculoviridae</taxon>
        <taxon>Alphabaculovirus</taxon>
        <taxon>Alphabaculovirus lydisparis</taxon>
    </lineage>
</organism>
<feature type="chain" id="PRO_0000132902" description="Major capsid protein">
    <location>
        <begin position="1"/>
        <end position="356"/>
    </location>
</feature>
<dbReference type="EMBL" id="D10835">
    <property type="protein sequence ID" value="BAA19869.1"/>
    <property type="molecule type" value="Genomic_DNA"/>
</dbReference>
<dbReference type="PIR" id="JQ1582">
    <property type="entry name" value="JQ1582"/>
</dbReference>
<dbReference type="SMR" id="P35840"/>
<dbReference type="GO" id="GO:0019028">
    <property type="term" value="C:viral capsid"/>
    <property type="evidence" value="ECO:0007669"/>
    <property type="project" value="UniProtKB-KW"/>
</dbReference>
<dbReference type="GO" id="GO:0005198">
    <property type="term" value="F:structural molecule activity"/>
    <property type="evidence" value="ECO:0007669"/>
    <property type="project" value="InterPro"/>
</dbReference>
<dbReference type="InterPro" id="IPR007589">
    <property type="entry name" value="Baculo_VP39"/>
</dbReference>
<dbReference type="Pfam" id="PF04501">
    <property type="entry name" value="Baculo_VP39"/>
    <property type="match status" value="1"/>
</dbReference>
<proteinExistence type="inferred from homology"/>
<reference key="1">
    <citation type="journal article" date="1992" name="J. Gen. Virol.">
        <title>Nucleotide sequence of the p39-capsid gene region of the Lymantria dispar nuclear polyhedrosis virus.</title>
        <authorList>
            <person name="Bjoernson R.M."/>
            <person name="Rohrmann G.F."/>
        </authorList>
    </citation>
    <scope>NUCLEOTIDE SEQUENCE [GENOMIC DNA]</scope>
</reference>